<feature type="chain" id="PRO_0000451570" description="DELTA-pseudomyrmecitoxin-Pp1a subunit B">
    <location>
        <begin position="1"/>
        <end position="33"/>
    </location>
</feature>
<feature type="disulfide bond" description="Interchain (with C-24 in subunit A)" evidence="1">
    <location>
        <position position="18"/>
    </location>
</feature>
<feature type="disulfide bond" description="Interchain (with C-14 in subunit A)" evidence="1">
    <location>
        <position position="28"/>
    </location>
</feature>
<organism evidence="2">
    <name type="scientific">Pseudomyrmex penetrator</name>
    <name type="common">Ant</name>
    <dbReference type="NCBI Taxonomy" id="621823"/>
    <lineage>
        <taxon>Eukaryota</taxon>
        <taxon>Metazoa</taxon>
        <taxon>Ecdysozoa</taxon>
        <taxon>Arthropoda</taxon>
        <taxon>Hexapoda</taxon>
        <taxon>Insecta</taxon>
        <taxon>Pterygota</taxon>
        <taxon>Neoptera</taxon>
        <taxon>Endopterygota</taxon>
        <taxon>Hymenoptera</taxon>
        <taxon>Apocrita</taxon>
        <taxon>Aculeata</taxon>
        <taxon>Formicoidea</taxon>
        <taxon>Formicidae</taxon>
        <taxon>Pseudomyrmecinae</taxon>
        <taxon>Pseudomyrmex</taxon>
    </lineage>
</organism>
<keyword id="KW-0903">Direct protein sequencing</keyword>
<keyword id="KW-1015">Disulfide bond</keyword>
<keyword id="KW-0964">Secreted</keyword>
<keyword id="KW-0800">Toxin</keyword>
<evidence type="ECO:0000269" key="1">
    <source>
    </source>
</evidence>
<evidence type="ECO:0000303" key="2">
    <source>
    </source>
</evidence>
<evidence type="ECO:0000305" key="3">
    <source>
    </source>
</evidence>
<name>PP1AB_PSEPY</name>
<protein>
    <recommendedName>
        <fullName evidence="2">DELTA-pseudomyrmecitoxin-Pp1a subunit B</fullName>
        <shortName evidence="2">DELTA-PSDTX-Pp1a subunit B</shortName>
    </recommendedName>
</protein>
<accession>C0HLS3</accession>
<sequence length="33" mass="3625">IDPLTILKILKGGLKSICKHRKYLDKACASIGQ</sequence>
<dbReference type="SMR" id="C0HLS3"/>
<dbReference type="GO" id="GO:0005576">
    <property type="term" value="C:extracellular region"/>
    <property type="evidence" value="ECO:0000314"/>
    <property type="project" value="UniProtKB"/>
</dbReference>
<dbReference type="GO" id="GO:0090729">
    <property type="term" value="F:toxin activity"/>
    <property type="evidence" value="ECO:0000314"/>
    <property type="project" value="UniProtKB"/>
</dbReference>
<dbReference type="GO" id="GO:0051715">
    <property type="term" value="P:cytolysis in another organism"/>
    <property type="evidence" value="ECO:0000314"/>
    <property type="project" value="UniProtKB"/>
</dbReference>
<dbReference type="GO" id="GO:0002213">
    <property type="term" value="P:defense response to insect"/>
    <property type="evidence" value="ECO:0000314"/>
    <property type="project" value="UniProtKB"/>
</dbReference>
<dbReference type="GO" id="GO:0035738">
    <property type="term" value="P:venom-mediated perturbation of biological process"/>
    <property type="evidence" value="ECO:0000314"/>
    <property type="project" value="UniProtKB"/>
</dbReference>
<proteinExistence type="evidence at protein level"/>
<reference key="1">
    <citation type="journal article" date="2020" name="ACS Pharmacol. Transl. Sci.">
        <title>Heterodimeric Insecticidal Peptide Provides New Insights into the Molecular and Functional Diversity of Ant Venoms.</title>
        <authorList>
            <person name="Touchard A."/>
            <person name="Mendel H.C."/>
            <person name="Boulogne I."/>
            <person name="Herzig V."/>
            <person name="Braga Emidio N."/>
            <person name="King G.F."/>
            <person name="Triquigneaux M."/>
            <person name="Jaquillard L."/>
            <person name="Beroud R."/>
            <person name="De Waard M."/>
            <person name="Delalande O."/>
            <person name="Dejean A."/>
            <person name="Muttenthaler M."/>
            <person name="Duplais C."/>
        </authorList>
    </citation>
    <scope>PROTEIN SEQUENCE</scope>
    <scope>IDENTIFICATION BY MASS SPECTROMETRY</scope>
    <scope>SYNTHESIS</scope>
    <scope>FUNCTION</scope>
    <scope>SUBUNIT</scope>
    <scope>SUBCELLULAR LOCATION</scope>
    <scope>TISSUE SPECIFICITY</scope>
    <scope>TOXIC DOSE</scope>
    <source>
        <tissue evidence="2">Venom</tissue>
    </source>
</reference>
<comment type="function">
    <text evidence="1">This heterodimer has insecticidal and cytotoxic properties (PubMed:33344898). Induces immediate paralysis when injected into blowflies (Lucilia cuprina), and then death within 24 hours (PubMed:33344898). Also inhibits the growth of Aedes albopictus mosquito C6/36 cells (PubMed:33344898).</text>
</comment>
<comment type="subunit">
    <text evidence="1">Heterodimer composed of subunit A and subunit B (DELTA-PSDTX-Pp1a); disulfide-linked.</text>
</comment>
<comment type="subcellular location">
    <subcellularLocation>
        <location evidence="1">Secreted</location>
    </subcellularLocation>
</comment>
<comment type="tissue specificity">
    <text evidence="3">Expressed by the venom gland.</text>
</comment>
<comment type="toxic dose">
    <text evidence="1">Heterodimer (A and B chains): PD(50) is 2.5 nmol/g in sheep blowflies (Lucilia cuprina) (at 0.5 hours post-injection).</text>
</comment>
<comment type="toxic dose">
    <text evidence="1">Heterodimer (A and B chains): LD(50) is 3.0 nmol/g by injection into the ventro-lateral thorax of sheep blowflies (Lucilia cuprina).</text>
</comment>
<comment type="toxic dose">
    <text evidence="1">Heterodimer (A and B chains): LD(50) is 1.04 um/ml in Aedes albopictus mosquito C6/36 cells.</text>
</comment>
<comment type="miscellaneous">
    <text evidence="1">Electrospray ionization experiments give a mass of 6598.6 Da for DELTA-pseudomyrmecitoxin-Pp1a heterodimer (subunits A+B).</text>
</comment>